<organism>
    <name type="scientific">Rattus norvegicus</name>
    <name type="common">Rat</name>
    <dbReference type="NCBI Taxonomy" id="10116"/>
    <lineage>
        <taxon>Eukaryota</taxon>
        <taxon>Metazoa</taxon>
        <taxon>Chordata</taxon>
        <taxon>Craniata</taxon>
        <taxon>Vertebrata</taxon>
        <taxon>Euteleostomi</taxon>
        <taxon>Mammalia</taxon>
        <taxon>Eutheria</taxon>
        <taxon>Euarchontoglires</taxon>
        <taxon>Glires</taxon>
        <taxon>Rodentia</taxon>
        <taxon>Myomorpha</taxon>
        <taxon>Muroidea</taxon>
        <taxon>Muridae</taxon>
        <taxon>Murinae</taxon>
        <taxon>Rattus</taxon>
    </lineage>
</organism>
<protein>
    <recommendedName>
        <fullName>Glyoxalase domain-containing protein 4</fullName>
    </recommendedName>
</protein>
<feature type="chain" id="PRO_0000280393" description="Glyoxalase domain-containing protein 4">
    <location>
        <begin position="1"/>
        <end position="298"/>
    </location>
</feature>
<feature type="domain" description="VOC 1" evidence="3">
    <location>
        <begin position="5"/>
        <end position="130"/>
    </location>
</feature>
<feature type="domain" description="VOC 2" evidence="3">
    <location>
        <begin position="137"/>
        <end position="258"/>
    </location>
</feature>
<feature type="modified residue" description="N6-succinyllysine" evidence="2">
    <location>
        <position position="109"/>
    </location>
</feature>
<feature type="modified residue" description="Phosphoserine" evidence="5">
    <location>
        <position position="131"/>
    </location>
</feature>
<feature type="modified residue" description="N6-succinyllysine" evidence="2">
    <location>
        <position position="273"/>
    </location>
</feature>
<evidence type="ECO:0000250" key="1"/>
<evidence type="ECO:0000250" key="2">
    <source>
        <dbReference type="UniProtKB" id="Q9CPV4"/>
    </source>
</evidence>
<evidence type="ECO:0000255" key="3">
    <source>
        <dbReference type="PROSITE-ProRule" id="PRU01163"/>
    </source>
</evidence>
<evidence type="ECO:0000305" key="4"/>
<evidence type="ECO:0007744" key="5">
    <source>
    </source>
</evidence>
<proteinExistence type="evidence at protein level"/>
<accession>Q5I0D1</accession>
<comment type="subunit">
    <text evidence="1">Interacts with NUDT9.</text>
</comment>
<comment type="subcellular location">
    <subcellularLocation>
        <location evidence="1">Mitochondrion</location>
    </subcellularLocation>
</comment>
<comment type="similarity">
    <text evidence="4">Belongs to the glyoxalase I family.</text>
</comment>
<reference key="1">
    <citation type="journal article" date="2004" name="Genome Res.">
        <title>The status, quality, and expansion of the NIH full-length cDNA project: the Mammalian Gene Collection (MGC).</title>
        <authorList>
            <consortium name="The MGC Project Team"/>
        </authorList>
    </citation>
    <scope>NUCLEOTIDE SEQUENCE [LARGE SCALE MRNA]</scope>
    <source>
        <tissue>Kidney</tissue>
    </source>
</reference>
<reference key="2">
    <citation type="submission" date="2007-07" db="UniProtKB">
        <authorList>
            <person name="Lubec G."/>
            <person name="Kang S.U."/>
        </authorList>
    </citation>
    <scope>PROTEIN SEQUENCE OF 131-140</scope>
    <scope>IDENTIFICATION BY MASS SPECTROMETRY</scope>
    <source>
        <strain>Sprague-Dawley</strain>
        <tissue>Brain</tissue>
    </source>
</reference>
<reference key="3">
    <citation type="journal article" date="2012" name="Nat. Commun.">
        <title>Quantitative maps of protein phosphorylation sites across 14 different rat organs and tissues.</title>
        <authorList>
            <person name="Lundby A."/>
            <person name="Secher A."/>
            <person name="Lage K."/>
            <person name="Nordsborg N.B."/>
            <person name="Dmytriyev A."/>
            <person name="Lundby C."/>
            <person name="Olsen J.V."/>
        </authorList>
    </citation>
    <scope>PHOSPHORYLATION [LARGE SCALE ANALYSIS] AT SER-131</scope>
    <scope>IDENTIFICATION BY MASS SPECTROMETRY [LARGE SCALE ANALYSIS]</scope>
</reference>
<keyword id="KW-0903">Direct protein sequencing</keyword>
<keyword id="KW-0496">Mitochondrion</keyword>
<keyword id="KW-0597">Phosphoprotein</keyword>
<keyword id="KW-1185">Reference proteome</keyword>
<keyword id="KW-0677">Repeat</keyword>
<sequence length="298" mass="33268">MVTRRALHFVFKVGNRFQTVHFFRDVLGMQVLRHEEFEEGCKAACNGPYDGKWSKTMVGFGPEDDHFVAELTYNYGIGDYKLGNDFMGLTLASSQAVSNARRLEWPLSKVAEGVFETEAPGGYKFYLQDRSPSQSDPVLKVTLAVSDLQKSLNYWSNLLGMKIYEQDEEKKWALLGYADDQCKLELQGIQGAVDHSAAFGRIAFSCPQKELPDLEDLMKRESQSILTPLVSLDTPGKATVQVVILADPDGHEICFVGDEAFRELSKMDPKGSKLLDDAMAADKSDEWFATRNKPKASG</sequence>
<name>GLOD4_RAT</name>
<dbReference type="EMBL" id="BC088458">
    <property type="protein sequence ID" value="AAH88458.1"/>
    <property type="molecule type" value="mRNA"/>
</dbReference>
<dbReference type="RefSeq" id="NP_001014249.1">
    <property type="nucleotide sequence ID" value="NM_001014227.1"/>
</dbReference>
<dbReference type="SMR" id="Q5I0D1"/>
<dbReference type="FunCoup" id="Q5I0D1">
    <property type="interactions" value="2364"/>
</dbReference>
<dbReference type="STRING" id="10116.ENSRNOP00000010386"/>
<dbReference type="iPTMnet" id="Q5I0D1"/>
<dbReference type="PhosphoSitePlus" id="Q5I0D1"/>
<dbReference type="SwissPalm" id="Q5I0D1"/>
<dbReference type="jPOST" id="Q5I0D1"/>
<dbReference type="PaxDb" id="10116-ENSRNOP00000010386"/>
<dbReference type="GeneID" id="363644"/>
<dbReference type="KEGG" id="rno:363644"/>
<dbReference type="AGR" id="RGD:1307010"/>
<dbReference type="CTD" id="51031"/>
<dbReference type="RGD" id="1307010">
    <property type="gene designation" value="Glod4"/>
</dbReference>
<dbReference type="VEuPathDB" id="HostDB:ENSRNOG00000007788"/>
<dbReference type="eggNOG" id="KOG2943">
    <property type="taxonomic scope" value="Eukaryota"/>
</dbReference>
<dbReference type="HOGENOM" id="CLU_044479_0_0_1"/>
<dbReference type="InParanoid" id="Q5I0D1"/>
<dbReference type="OrthoDB" id="1545884at2759"/>
<dbReference type="PhylomeDB" id="Q5I0D1"/>
<dbReference type="PRO" id="PR:Q5I0D1"/>
<dbReference type="Proteomes" id="UP000002494">
    <property type="component" value="Chromosome 10"/>
</dbReference>
<dbReference type="Bgee" id="ENSRNOG00000007788">
    <property type="expression patterns" value="Expressed in stomach and 20 other cell types or tissues"/>
</dbReference>
<dbReference type="GO" id="GO:0005739">
    <property type="term" value="C:mitochondrion"/>
    <property type="evidence" value="ECO:0007669"/>
    <property type="project" value="UniProtKB-SubCell"/>
</dbReference>
<dbReference type="CDD" id="cd16357">
    <property type="entry name" value="GLOD4_C"/>
    <property type="match status" value="1"/>
</dbReference>
<dbReference type="CDD" id="cd08358">
    <property type="entry name" value="GLOD4_N"/>
    <property type="match status" value="1"/>
</dbReference>
<dbReference type="FunFam" id="3.10.180.10:FF:000010">
    <property type="entry name" value="Glyoxalase domain-containing protein 4"/>
    <property type="match status" value="1"/>
</dbReference>
<dbReference type="FunFam" id="3.10.180.10:FF:000014">
    <property type="entry name" value="glyoxalase domain-containing protein 4"/>
    <property type="match status" value="1"/>
</dbReference>
<dbReference type="Gene3D" id="3.10.180.10">
    <property type="entry name" value="2,3-Dihydroxybiphenyl 1,2-Dioxygenase, domain 1"/>
    <property type="match status" value="2"/>
</dbReference>
<dbReference type="InterPro" id="IPR043193">
    <property type="entry name" value="GLOD4"/>
</dbReference>
<dbReference type="InterPro" id="IPR043194">
    <property type="entry name" value="GLOD4_C"/>
</dbReference>
<dbReference type="InterPro" id="IPR029068">
    <property type="entry name" value="Glyas_Bleomycin-R_OHBP_Dase"/>
</dbReference>
<dbReference type="InterPro" id="IPR037523">
    <property type="entry name" value="VOC"/>
</dbReference>
<dbReference type="PANTHER" id="PTHR46466">
    <property type="entry name" value="GLYOXALASE DOMAIN-CONTAINING PROTEIN 4"/>
    <property type="match status" value="1"/>
</dbReference>
<dbReference type="PANTHER" id="PTHR46466:SF1">
    <property type="entry name" value="GLYOXALASE DOMAIN-CONTAINING PROTEIN 4"/>
    <property type="match status" value="1"/>
</dbReference>
<dbReference type="Pfam" id="PF21701">
    <property type="entry name" value="GLOD4_C"/>
    <property type="match status" value="1"/>
</dbReference>
<dbReference type="Pfam" id="PF21207">
    <property type="entry name" value="GLOD4_N"/>
    <property type="match status" value="1"/>
</dbReference>
<dbReference type="SUPFAM" id="SSF54593">
    <property type="entry name" value="Glyoxalase/Bleomycin resistance protein/Dihydroxybiphenyl dioxygenase"/>
    <property type="match status" value="1"/>
</dbReference>
<dbReference type="PROSITE" id="PS51819">
    <property type="entry name" value="VOC"/>
    <property type="match status" value="2"/>
</dbReference>
<gene>
    <name type="primary">Glod4</name>
</gene>